<feature type="chain" id="PRO_0000201234" description="BolA-like protein 1">
    <location>
        <begin position="1"/>
        <end position="137"/>
    </location>
</feature>
<feature type="region of interest" description="Disordered" evidence="3">
    <location>
        <begin position="115"/>
        <end position="137"/>
    </location>
</feature>
<feature type="modified residue" description="Phosphoserine" evidence="5">
    <location>
        <position position="81"/>
    </location>
</feature>
<feature type="strand" evidence="6">
    <location>
        <begin position="27"/>
        <end position="29"/>
    </location>
</feature>
<feature type="helix" evidence="6">
    <location>
        <begin position="31"/>
        <end position="43"/>
    </location>
</feature>
<feature type="strand" evidence="6">
    <location>
        <begin position="47"/>
        <end position="53"/>
    </location>
</feature>
<feature type="strand" evidence="6">
    <location>
        <begin position="57"/>
        <end position="59"/>
    </location>
</feature>
<feature type="strand" evidence="6">
    <location>
        <begin position="66"/>
        <end position="73"/>
    </location>
</feature>
<feature type="helix" evidence="6">
    <location>
        <begin position="75"/>
        <end position="77"/>
    </location>
</feature>
<feature type="helix" evidence="6">
    <location>
        <begin position="82"/>
        <end position="92"/>
    </location>
</feature>
<feature type="helix" evidence="6">
    <location>
        <begin position="94"/>
        <end position="97"/>
    </location>
</feature>
<feature type="turn" evidence="6">
    <location>
        <begin position="98"/>
        <end position="100"/>
    </location>
</feature>
<feature type="strand" evidence="6">
    <location>
        <begin position="102"/>
        <end position="109"/>
    </location>
</feature>
<feature type="turn" evidence="6">
    <location>
        <begin position="111"/>
        <end position="116"/>
    </location>
</feature>
<organism>
    <name type="scientific">Mus musculus</name>
    <name type="common">Mouse</name>
    <dbReference type="NCBI Taxonomy" id="10090"/>
    <lineage>
        <taxon>Eukaryota</taxon>
        <taxon>Metazoa</taxon>
        <taxon>Chordata</taxon>
        <taxon>Craniata</taxon>
        <taxon>Vertebrata</taxon>
        <taxon>Euteleostomi</taxon>
        <taxon>Mammalia</taxon>
        <taxon>Eutheria</taxon>
        <taxon>Euarchontoglires</taxon>
        <taxon>Glires</taxon>
        <taxon>Rodentia</taxon>
        <taxon>Myomorpha</taxon>
        <taxon>Muroidea</taxon>
        <taxon>Muridae</taxon>
        <taxon>Murinae</taxon>
        <taxon>Mus</taxon>
        <taxon>Mus</taxon>
    </lineage>
</organism>
<evidence type="ECO:0000250" key="1">
    <source>
        <dbReference type="UniProtKB" id="Q3E793"/>
    </source>
</evidence>
<evidence type="ECO:0000250" key="2">
    <source>
        <dbReference type="UniProtKB" id="Q9Y3E2"/>
    </source>
</evidence>
<evidence type="ECO:0000256" key="3">
    <source>
        <dbReference type="SAM" id="MobiDB-lite"/>
    </source>
</evidence>
<evidence type="ECO:0000305" key="4"/>
<evidence type="ECO:0007744" key="5">
    <source>
    </source>
</evidence>
<evidence type="ECO:0007829" key="6">
    <source>
        <dbReference type="PDB" id="1V60"/>
    </source>
</evidence>
<dbReference type="EMBL" id="AK007718">
    <property type="protein sequence ID" value="BAB25210.1"/>
    <property type="molecule type" value="mRNA"/>
</dbReference>
<dbReference type="EMBL" id="BC027558">
    <property type="protein sequence ID" value="AAH27558.1"/>
    <property type="molecule type" value="mRNA"/>
</dbReference>
<dbReference type="CCDS" id="CCDS17632.1"/>
<dbReference type="RefSeq" id="NP_081251.1">
    <property type="nucleotide sequence ID" value="NM_026975.2"/>
</dbReference>
<dbReference type="RefSeq" id="XP_006502075.1">
    <property type="nucleotide sequence ID" value="XM_006502012.2"/>
</dbReference>
<dbReference type="RefSeq" id="XP_036019163.1">
    <property type="nucleotide sequence ID" value="XM_036163270.1"/>
</dbReference>
<dbReference type="PDB" id="1V60">
    <property type="method" value="NMR"/>
    <property type="chains" value="A=13-128"/>
</dbReference>
<dbReference type="PDBsum" id="1V60"/>
<dbReference type="SMR" id="Q9D8S9"/>
<dbReference type="BioGRID" id="213267">
    <property type="interactions" value="2"/>
</dbReference>
<dbReference type="FunCoup" id="Q9D8S9">
    <property type="interactions" value="1183"/>
</dbReference>
<dbReference type="STRING" id="10090.ENSMUSP00000102716"/>
<dbReference type="GlyGen" id="Q9D8S9">
    <property type="glycosylation" value="2 sites, 1 N-linked glycan (1 site), 1 O-linked glycan (1 site)"/>
</dbReference>
<dbReference type="iPTMnet" id="Q9D8S9"/>
<dbReference type="PhosphoSitePlus" id="Q9D8S9"/>
<dbReference type="SwissPalm" id="Q9D8S9"/>
<dbReference type="CPTAC" id="non-CPTAC-3769"/>
<dbReference type="jPOST" id="Q9D8S9"/>
<dbReference type="PaxDb" id="10090-ENSMUSP00000102716"/>
<dbReference type="PeptideAtlas" id="Q9D8S9"/>
<dbReference type="ProteomicsDB" id="273834"/>
<dbReference type="Pumba" id="Q9D8S9"/>
<dbReference type="Antibodypedia" id="1825">
    <property type="antibodies" value="178 antibodies from 25 providers"/>
</dbReference>
<dbReference type="Ensembl" id="ENSMUST00000016087.4">
    <property type="protein sequence ID" value="ENSMUSP00000016087.4"/>
    <property type="gene ID" value="ENSMUSG00000015943.12"/>
</dbReference>
<dbReference type="Ensembl" id="ENSMUST00000107099.8">
    <property type="protein sequence ID" value="ENSMUSP00000102716.2"/>
    <property type="gene ID" value="ENSMUSG00000015943.12"/>
</dbReference>
<dbReference type="Ensembl" id="ENSMUST00000177442.2">
    <property type="protein sequence ID" value="ENSMUSP00000134765.2"/>
    <property type="gene ID" value="ENSMUSG00000015943.12"/>
</dbReference>
<dbReference type="GeneID" id="69168"/>
<dbReference type="KEGG" id="mmu:69168"/>
<dbReference type="UCSC" id="uc008qmg.2">
    <property type="organism name" value="mouse"/>
</dbReference>
<dbReference type="AGR" id="MGI:1916418"/>
<dbReference type="CTD" id="51027"/>
<dbReference type="MGI" id="MGI:1916418">
    <property type="gene designation" value="Bola1"/>
</dbReference>
<dbReference type="VEuPathDB" id="HostDB:ENSMUSG00000015943"/>
<dbReference type="eggNOG" id="KOG2313">
    <property type="taxonomic scope" value="Eukaryota"/>
</dbReference>
<dbReference type="GeneTree" id="ENSGT00510000048165"/>
<dbReference type="HOGENOM" id="CLU_109462_3_0_1"/>
<dbReference type="InParanoid" id="Q9D8S9"/>
<dbReference type="OMA" id="CLGGFGK"/>
<dbReference type="OrthoDB" id="4983at2759"/>
<dbReference type="PhylomeDB" id="Q9D8S9"/>
<dbReference type="TreeFam" id="TF354266"/>
<dbReference type="BioGRID-ORCS" id="69168">
    <property type="hits" value="1 hit in 76 CRISPR screens"/>
</dbReference>
<dbReference type="ChiTaRS" id="Bola1">
    <property type="organism name" value="mouse"/>
</dbReference>
<dbReference type="EvolutionaryTrace" id="Q9D8S9"/>
<dbReference type="PRO" id="PR:Q9D8S9"/>
<dbReference type="Proteomes" id="UP000000589">
    <property type="component" value="Chromosome 3"/>
</dbReference>
<dbReference type="RNAct" id="Q9D8S9">
    <property type="molecule type" value="protein"/>
</dbReference>
<dbReference type="Bgee" id="ENSMUSG00000015943">
    <property type="expression patterns" value="Expressed in epiblast cell in embryo and 161 other cell types or tissues"/>
</dbReference>
<dbReference type="GO" id="GO:1990229">
    <property type="term" value="C:iron-sulfur cluster assembly complex"/>
    <property type="evidence" value="ECO:0007669"/>
    <property type="project" value="Ensembl"/>
</dbReference>
<dbReference type="GO" id="GO:0005739">
    <property type="term" value="C:mitochondrion"/>
    <property type="evidence" value="ECO:0007005"/>
    <property type="project" value="MGI"/>
</dbReference>
<dbReference type="Gene3D" id="3.10.20.90">
    <property type="entry name" value="Phosphatidylinositol 3-kinase Catalytic Subunit, Chain A, domain 1"/>
    <property type="match status" value="1"/>
</dbReference>
<dbReference type="InterPro" id="IPR002634">
    <property type="entry name" value="BolA"/>
</dbReference>
<dbReference type="InterPro" id="IPR036065">
    <property type="entry name" value="BolA-like_sf"/>
</dbReference>
<dbReference type="InterPro" id="IPR050961">
    <property type="entry name" value="BolA/IbaG_stress_morph_reg"/>
</dbReference>
<dbReference type="PANTHER" id="PTHR46229">
    <property type="entry name" value="BOLA TRANSCRIPTION REGULATOR"/>
    <property type="match status" value="1"/>
</dbReference>
<dbReference type="PANTHER" id="PTHR46229:SF2">
    <property type="entry name" value="BOLA-LIKE PROTEIN 1"/>
    <property type="match status" value="1"/>
</dbReference>
<dbReference type="Pfam" id="PF01722">
    <property type="entry name" value="BolA"/>
    <property type="match status" value="1"/>
</dbReference>
<dbReference type="PIRSF" id="PIRSF003113">
    <property type="entry name" value="BolA"/>
    <property type="match status" value="1"/>
</dbReference>
<dbReference type="SUPFAM" id="SSF82657">
    <property type="entry name" value="BolA-like"/>
    <property type="match status" value="1"/>
</dbReference>
<keyword id="KW-0002">3D-structure</keyword>
<keyword id="KW-0496">Mitochondrion</keyword>
<keyword id="KW-0597">Phosphoprotein</keyword>
<keyword id="KW-1185">Reference proteome</keyword>
<reference key="1">
    <citation type="journal article" date="2005" name="Science">
        <title>The transcriptional landscape of the mammalian genome.</title>
        <authorList>
            <person name="Carninci P."/>
            <person name="Kasukawa T."/>
            <person name="Katayama S."/>
            <person name="Gough J."/>
            <person name="Frith M.C."/>
            <person name="Maeda N."/>
            <person name="Oyama R."/>
            <person name="Ravasi T."/>
            <person name="Lenhard B."/>
            <person name="Wells C."/>
            <person name="Kodzius R."/>
            <person name="Shimokawa K."/>
            <person name="Bajic V.B."/>
            <person name="Brenner S.E."/>
            <person name="Batalov S."/>
            <person name="Forrest A.R."/>
            <person name="Zavolan M."/>
            <person name="Davis M.J."/>
            <person name="Wilming L.G."/>
            <person name="Aidinis V."/>
            <person name="Allen J.E."/>
            <person name="Ambesi-Impiombato A."/>
            <person name="Apweiler R."/>
            <person name="Aturaliya R.N."/>
            <person name="Bailey T.L."/>
            <person name="Bansal M."/>
            <person name="Baxter L."/>
            <person name="Beisel K.W."/>
            <person name="Bersano T."/>
            <person name="Bono H."/>
            <person name="Chalk A.M."/>
            <person name="Chiu K.P."/>
            <person name="Choudhary V."/>
            <person name="Christoffels A."/>
            <person name="Clutterbuck D.R."/>
            <person name="Crowe M.L."/>
            <person name="Dalla E."/>
            <person name="Dalrymple B.P."/>
            <person name="de Bono B."/>
            <person name="Della Gatta G."/>
            <person name="di Bernardo D."/>
            <person name="Down T."/>
            <person name="Engstrom P."/>
            <person name="Fagiolini M."/>
            <person name="Faulkner G."/>
            <person name="Fletcher C.F."/>
            <person name="Fukushima T."/>
            <person name="Furuno M."/>
            <person name="Futaki S."/>
            <person name="Gariboldi M."/>
            <person name="Georgii-Hemming P."/>
            <person name="Gingeras T.R."/>
            <person name="Gojobori T."/>
            <person name="Green R.E."/>
            <person name="Gustincich S."/>
            <person name="Harbers M."/>
            <person name="Hayashi Y."/>
            <person name="Hensch T.K."/>
            <person name="Hirokawa N."/>
            <person name="Hill D."/>
            <person name="Huminiecki L."/>
            <person name="Iacono M."/>
            <person name="Ikeo K."/>
            <person name="Iwama A."/>
            <person name="Ishikawa T."/>
            <person name="Jakt M."/>
            <person name="Kanapin A."/>
            <person name="Katoh M."/>
            <person name="Kawasawa Y."/>
            <person name="Kelso J."/>
            <person name="Kitamura H."/>
            <person name="Kitano H."/>
            <person name="Kollias G."/>
            <person name="Krishnan S.P."/>
            <person name="Kruger A."/>
            <person name="Kummerfeld S.K."/>
            <person name="Kurochkin I.V."/>
            <person name="Lareau L.F."/>
            <person name="Lazarevic D."/>
            <person name="Lipovich L."/>
            <person name="Liu J."/>
            <person name="Liuni S."/>
            <person name="McWilliam S."/>
            <person name="Madan Babu M."/>
            <person name="Madera M."/>
            <person name="Marchionni L."/>
            <person name="Matsuda H."/>
            <person name="Matsuzawa S."/>
            <person name="Miki H."/>
            <person name="Mignone F."/>
            <person name="Miyake S."/>
            <person name="Morris K."/>
            <person name="Mottagui-Tabar S."/>
            <person name="Mulder N."/>
            <person name="Nakano N."/>
            <person name="Nakauchi H."/>
            <person name="Ng P."/>
            <person name="Nilsson R."/>
            <person name="Nishiguchi S."/>
            <person name="Nishikawa S."/>
            <person name="Nori F."/>
            <person name="Ohara O."/>
            <person name="Okazaki Y."/>
            <person name="Orlando V."/>
            <person name="Pang K.C."/>
            <person name="Pavan W.J."/>
            <person name="Pavesi G."/>
            <person name="Pesole G."/>
            <person name="Petrovsky N."/>
            <person name="Piazza S."/>
            <person name="Reed J."/>
            <person name="Reid J.F."/>
            <person name="Ring B.Z."/>
            <person name="Ringwald M."/>
            <person name="Rost B."/>
            <person name="Ruan Y."/>
            <person name="Salzberg S.L."/>
            <person name="Sandelin A."/>
            <person name="Schneider C."/>
            <person name="Schoenbach C."/>
            <person name="Sekiguchi K."/>
            <person name="Semple C.A."/>
            <person name="Seno S."/>
            <person name="Sessa L."/>
            <person name="Sheng Y."/>
            <person name="Shibata Y."/>
            <person name="Shimada H."/>
            <person name="Shimada K."/>
            <person name="Silva D."/>
            <person name="Sinclair B."/>
            <person name="Sperling S."/>
            <person name="Stupka E."/>
            <person name="Sugiura K."/>
            <person name="Sultana R."/>
            <person name="Takenaka Y."/>
            <person name="Taki K."/>
            <person name="Tammoja K."/>
            <person name="Tan S.L."/>
            <person name="Tang S."/>
            <person name="Taylor M.S."/>
            <person name="Tegner J."/>
            <person name="Teichmann S.A."/>
            <person name="Ueda H.R."/>
            <person name="van Nimwegen E."/>
            <person name="Verardo R."/>
            <person name="Wei C.L."/>
            <person name="Yagi K."/>
            <person name="Yamanishi H."/>
            <person name="Zabarovsky E."/>
            <person name="Zhu S."/>
            <person name="Zimmer A."/>
            <person name="Hide W."/>
            <person name="Bult C."/>
            <person name="Grimmond S.M."/>
            <person name="Teasdale R.D."/>
            <person name="Liu E.T."/>
            <person name="Brusic V."/>
            <person name="Quackenbush J."/>
            <person name="Wahlestedt C."/>
            <person name="Mattick J.S."/>
            <person name="Hume D.A."/>
            <person name="Kai C."/>
            <person name="Sasaki D."/>
            <person name="Tomaru Y."/>
            <person name="Fukuda S."/>
            <person name="Kanamori-Katayama M."/>
            <person name="Suzuki M."/>
            <person name="Aoki J."/>
            <person name="Arakawa T."/>
            <person name="Iida J."/>
            <person name="Imamura K."/>
            <person name="Itoh M."/>
            <person name="Kato T."/>
            <person name="Kawaji H."/>
            <person name="Kawagashira N."/>
            <person name="Kawashima T."/>
            <person name="Kojima M."/>
            <person name="Kondo S."/>
            <person name="Konno H."/>
            <person name="Nakano K."/>
            <person name="Ninomiya N."/>
            <person name="Nishio T."/>
            <person name="Okada M."/>
            <person name="Plessy C."/>
            <person name="Shibata K."/>
            <person name="Shiraki T."/>
            <person name="Suzuki S."/>
            <person name="Tagami M."/>
            <person name="Waki K."/>
            <person name="Watahiki A."/>
            <person name="Okamura-Oho Y."/>
            <person name="Suzuki H."/>
            <person name="Kawai J."/>
            <person name="Hayashizaki Y."/>
        </authorList>
    </citation>
    <scope>NUCLEOTIDE SEQUENCE [LARGE SCALE MRNA]</scope>
    <source>
        <strain>C57BL/6J</strain>
        <tissue>Pancreas</tissue>
    </source>
</reference>
<reference key="2">
    <citation type="journal article" date="2004" name="Genome Res.">
        <title>The status, quality, and expansion of the NIH full-length cDNA project: the Mammalian Gene Collection (MGC).</title>
        <authorList>
            <consortium name="The MGC Project Team"/>
        </authorList>
    </citation>
    <scope>NUCLEOTIDE SEQUENCE [LARGE SCALE MRNA]</scope>
    <source>
        <tissue>Uterus</tissue>
    </source>
</reference>
<reference key="3">
    <citation type="journal article" date="2010" name="Cell">
        <title>A tissue-specific atlas of mouse protein phosphorylation and expression.</title>
        <authorList>
            <person name="Huttlin E.L."/>
            <person name="Jedrychowski M.P."/>
            <person name="Elias J.E."/>
            <person name="Goswami T."/>
            <person name="Rad R."/>
            <person name="Beausoleil S.A."/>
            <person name="Villen J."/>
            <person name="Haas W."/>
            <person name="Sowa M.E."/>
            <person name="Gygi S.P."/>
        </authorList>
    </citation>
    <scope>PHOSPHORYLATION [LARGE SCALE ANALYSIS] AT SER-81</scope>
    <scope>IDENTIFICATION BY MASS SPECTROMETRY [LARGE SCALE ANALYSIS]</scope>
    <source>
        <tissue>Brain</tissue>
        <tissue>Brown adipose tissue</tissue>
        <tissue>Heart</tissue>
        <tissue>Kidney</tissue>
        <tissue>Liver</tissue>
        <tissue>Lung</tissue>
        <tissue>Pancreas</tissue>
        <tissue>Spleen</tissue>
        <tissue>Testis</tissue>
    </source>
</reference>
<reference key="4">
    <citation type="submission" date="2003-11" db="PDB data bank">
        <title>Solution structure of Bola1 protein from Mus musculus.</title>
        <authorList>
            <consortium name="RIKEN structural genomics initiative (RSGI)"/>
        </authorList>
    </citation>
    <scope>STRUCTURE BY NMR OF 13-128</scope>
</reference>
<proteinExistence type="evidence at protein level"/>
<gene>
    <name type="primary">Bola1</name>
</gene>
<protein>
    <recommendedName>
        <fullName>BolA-like protein 1</fullName>
    </recommendedName>
</protein>
<name>BOLA1_MOUSE</name>
<sequence length="137" mass="14379">MLSARSAQCMVSMATRSCVSRGSAGSAAAGPVEAAIRAKLEQALSPEVLELRNESGGHAVPAGSETHFRVAVVSSRFEGMSPLQRHRLVHEALSEELAGPVHALAIQAKTPAQWRENPQLDISPPCLGGSKKTRGTS</sequence>
<comment type="function">
    <text evidence="1 2">Acts as a mitochondrial iron-sulfur (Fe-S) cluster assembly factor that facilitates (Fe-S) cluster insertion into a subset of mitochondrial proteins (By similarity). Probably acts together with the monothiol glutaredoxin GLRX5. May protect cells against oxidative stress (By similarity).</text>
</comment>
<comment type="subunit">
    <text evidence="2">Interacts with GLRX5.</text>
</comment>
<comment type="subcellular location">
    <subcellularLocation>
        <location evidence="2">Mitochondrion</location>
    </subcellularLocation>
</comment>
<comment type="similarity">
    <text evidence="4">Belongs to the BolA/IbaG family.</text>
</comment>
<accession>Q9D8S9</accession>